<keyword id="KW-0150">Chloroplast</keyword>
<keyword id="KW-0240">DNA-directed RNA polymerase</keyword>
<keyword id="KW-0460">Magnesium</keyword>
<keyword id="KW-0479">Metal-binding</keyword>
<keyword id="KW-0548">Nucleotidyltransferase</keyword>
<keyword id="KW-0934">Plastid</keyword>
<keyword id="KW-0804">Transcription</keyword>
<keyword id="KW-0808">Transferase</keyword>
<keyword id="KW-0862">Zinc</keyword>
<protein>
    <recommendedName>
        <fullName evidence="1">DNA-directed RNA polymerase subunit beta'</fullName>
        <ecNumber evidence="1">2.7.7.6</ecNumber>
    </recommendedName>
    <alternativeName>
        <fullName evidence="1">PEP</fullName>
    </alternativeName>
    <alternativeName>
        <fullName evidence="1">Plastid-encoded RNA polymerase subunit beta'</fullName>
        <shortName evidence="1">RNA polymerase subunit beta'</shortName>
    </alternativeName>
</protein>
<proteinExistence type="inferred from homology"/>
<organism>
    <name type="scientific">Piper cenocladum</name>
    <name type="common">Ant piper</name>
    <dbReference type="NCBI Taxonomy" id="398741"/>
    <lineage>
        <taxon>Eukaryota</taxon>
        <taxon>Viridiplantae</taxon>
        <taxon>Streptophyta</taxon>
        <taxon>Embryophyta</taxon>
        <taxon>Tracheophyta</taxon>
        <taxon>Spermatophyta</taxon>
        <taxon>Magnoliopsida</taxon>
        <taxon>Magnoliidae</taxon>
        <taxon>Piperales</taxon>
        <taxon>Piperaceae</taxon>
        <taxon>Piper</taxon>
    </lineage>
</organism>
<dbReference type="EC" id="2.7.7.6" evidence="1"/>
<dbReference type="EMBL" id="DQ887677">
    <property type="protein sequence ID" value="ABI14463.1"/>
    <property type="molecule type" value="Genomic_DNA"/>
</dbReference>
<dbReference type="RefSeq" id="YP_784464.1">
    <property type="nucleotide sequence ID" value="NC_008457.1"/>
</dbReference>
<dbReference type="SMR" id="Q06GR9"/>
<dbReference type="GeneID" id="4363712"/>
<dbReference type="GO" id="GO:0009507">
    <property type="term" value="C:chloroplast"/>
    <property type="evidence" value="ECO:0007669"/>
    <property type="project" value="UniProtKB-SubCell"/>
</dbReference>
<dbReference type="GO" id="GO:0000428">
    <property type="term" value="C:DNA-directed RNA polymerase complex"/>
    <property type="evidence" value="ECO:0007669"/>
    <property type="project" value="UniProtKB-KW"/>
</dbReference>
<dbReference type="GO" id="GO:0005739">
    <property type="term" value="C:mitochondrion"/>
    <property type="evidence" value="ECO:0007669"/>
    <property type="project" value="GOC"/>
</dbReference>
<dbReference type="GO" id="GO:0003677">
    <property type="term" value="F:DNA binding"/>
    <property type="evidence" value="ECO:0007669"/>
    <property type="project" value="UniProtKB-UniRule"/>
</dbReference>
<dbReference type="GO" id="GO:0003899">
    <property type="term" value="F:DNA-directed RNA polymerase activity"/>
    <property type="evidence" value="ECO:0007669"/>
    <property type="project" value="UniProtKB-UniRule"/>
</dbReference>
<dbReference type="GO" id="GO:0000287">
    <property type="term" value="F:magnesium ion binding"/>
    <property type="evidence" value="ECO:0007669"/>
    <property type="project" value="UniProtKB-UniRule"/>
</dbReference>
<dbReference type="GO" id="GO:0008270">
    <property type="term" value="F:zinc ion binding"/>
    <property type="evidence" value="ECO:0007669"/>
    <property type="project" value="UniProtKB-UniRule"/>
</dbReference>
<dbReference type="GO" id="GO:0006351">
    <property type="term" value="P:DNA-templated transcription"/>
    <property type="evidence" value="ECO:0007669"/>
    <property type="project" value="UniProtKB-UniRule"/>
</dbReference>
<dbReference type="FunFam" id="4.10.860.120:FF:000007">
    <property type="entry name" value="DNA-directed RNA polymerase subunit gamma"/>
    <property type="match status" value="1"/>
</dbReference>
<dbReference type="Gene3D" id="1.10.40.90">
    <property type="match status" value="1"/>
</dbReference>
<dbReference type="Gene3D" id="2.40.40.20">
    <property type="match status" value="1"/>
</dbReference>
<dbReference type="Gene3D" id="4.10.860.120">
    <property type="entry name" value="RNA polymerase II, clamp domain"/>
    <property type="match status" value="1"/>
</dbReference>
<dbReference type="Gene3D" id="1.10.274.100">
    <property type="entry name" value="RNA polymerase Rpb1, domain 3"/>
    <property type="match status" value="1"/>
</dbReference>
<dbReference type="HAMAP" id="MF_01323">
    <property type="entry name" value="RNApol_bact_RpoC1"/>
    <property type="match status" value="1"/>
</dbReference>
<dbReference type="InterPro" id="IPR045867">
    <property type="entry name" value="DNA-dir_RpoC_beta_prime"/>
</dbReference>
<dbReference type="InterPro" id="IPR000722">
    <property type="entry name" value="RNA_pol_asu"/>
</dbReference>
<dbReference type="InterPro" id="IPR006592">
    <property type="entry name" value="RNA_pol_N"/>
</dbReference>
<dbReference type="InterPro" id="IPR007080">
    <property type="entry name" value="RNA_pol_Rpb1_1"/>
</dbReference>
<dbReference type="InterPro" id="IPR042102">
    <property type="entry name" value="RNA_pol_Rpb1_3_sf"/>
</dbReference>
<dbReference type="InterPro" id="IPR044893">
    <property type="entry name" value="RNA_pol_Rpb1_clamp_domain"/>
</dbReference>
<dbReference type="InterPro" id="IPR034678">
    <property type="entry name" value="RNApol_RpoC1"/>
</dbReference>
<dbReference type="PANTHER" id="PTHR19376">
    <property type="entry name" value="DNA-DIRECTED RNA POLYMERASE"/>
    <property type="match status" value="1"/>
</dbReference>
<dbReference type="PANTHER" id="PTHR19376:SF54">
    <property type="entry name" value="DNA-DIRECTED RNA POLYMERASE SUBUNIT BETA"/>
    <property type="match status" value="1"/>
</dbReference>
<dbReference type="Pfam" id="PF04997">
    <property type="entry name" value="RNA_pol_Rpb1_1"/>
    <property type="match status" value="1"/>
</dbReference>
<dbReference type="Pfam" id="PF00623">
    <property type="entry name" value="RNA_pol_Rpb1_2"/>
    <property type="match status" value="2"/>
</dbReference>
<dbReference type="SMART" id="SM00663">
    <property type="entry name" value="RPOLA_N"/>
    <property type="match status" value="1"/>
</dbReference>
<dbReference type="SUPFAM" id="SSF64484">
    <property type="entry name" value="beta and beta-prime subunits of DNA dependent RNA-polymerase"/>
    <property type="match status" value="1"/>
</dbReference>
<evidence type="ECO:0000255" key="1">
    <source>
        <dbReference type="HAMAP-Rule" id="MF_01323"/>
    </source>
</evidence>
<feature type="chain" id="PRO_0000277175" description="DNA-directed RNA polymerase subunit beta'">
    <location>
        <begin position="1"/>
        <end position="688"/>
    </location>
</feature>
<feature type="binding site" evidence="1">
    <location>
        <position position="69"/>
    </location>
    <ligand>
        <name>Zn(2+)</name>
        <dbReference type="ChEBI" id="CHEBI:29105"/>
    </ligand>
</feature>
<feature type="binding site" evidence="1">
    <location>
        <position position="71"/>
    </location>
    <ligand>
        <name>Zn(2+)</name>
        <dbReference type="ChEBI" id="CHEBI:29105"/>
    </ligand>
</feature>
<feature type="binding site" evidence="1">
    <location>
        <position position="87"/>
    </location>
    <ligand>
        <name>Zn(2+)</name>
        <dbReference type="ChEBI" id="CHEBI:29105"/>
    </ligand>
</feature>
<feature type="binding site" evidence="1">
    <location>
        <position position="90"/>
    </location>
    <ligand>
        <name>Zn(2+)</name>
        <dbReference type="ChEBI" id="CHEBI:29105"/>
    </ligand>
</feature>
<feature type="binding site" evidence="1">
    <location>
        <position position="489"/>
    </location>
    <ligand>
        <name>Mg(2+)</name>
        <dbReference type="ChEBI" id="CHEBI:18420"/>
    </ligand>
</feature>
<feature type="binding site" evidence="1">
    <location>
        <position position="491"/>
    </location>
    <ligand>
        <name>Mg(2+)</name>
        <dbReference type="ChEBI" id="CHEBI:18420"/>
    </ligand>
</feature>
<feature type="binding site" evidence="1">
    <location>
        <position position="493"/>
    </location>
    <ligand>
        <name>Mg(2+)</name>
        <dbReference type="ChEBI" id="CHEBI:18420"/>
    </ligand>
</feature>
<name>RPOC1_PIPCE</name>
<comment type="function">
    <text evidence="1">DNA-dependent RNA polymerase catalyzes the transcription of DNA into RNA using the four ribonucleoside triphosphates as substrates.</text>
</comment>
<comment type="catalytic activity">
    <reaction evidence="1">
        <text>RNA(n) + a ribonucleoside 5'-triphosphate = RNA(n+1) + diphosphate</text>
        <dbReference type="Rhea" id="RHEA:21248"/>
        <dbReference type="Rhea" id="RHEA-COMP:14527"/>
        <dbReference type="Rhea" id="RHEA-COMP:17342"/>
        <dbReference type="ChEBI" id="CHEBI:33019"/>
        <dbReference type="ChEBI" id="CHEBI:61557"/>
        <dbReference type="ChEBI" id="CHEBI:140395"/>
        <dbReference type="EC" id="2.7.7.6"/>
    </reaction>
</comment>
<comment type="cofactor">
    <cofactor evidence="1">
        <name>Mg(2+)</name>
        <dbReference type="ChEBI" id="CHEBI:18420"/>
    </cofactor>
    <text evidence="1">Binds 1 Mg(2+) ion per subunit.</text>
</comment>
<comment type="cofactor">
    <cofactor evidence="1">
        <name>Zn(2+)</name>
        <dbReference type="ChEBI" id="CHEBI:29105"/>
    </cofactor>
    <text evidence="1">Binds 1 Zn(2+) ion per subunit.</text>
</comment>
<comment type="subunit">
    <text evidence="1">In plastids the minimal PEP RNA polymerase catalytic core is composed of four subunits: alpha, beta, beta', and beta''. When a (nuclear-encoded) sigma factor is associated with the core the holoenzyme is formed, which can initiate transcription.</text>
</comment>
<comment type="subcellular location">
    <subcellularLocation>
        <location evidence="1">Plastid</location>
        <location evidence="1">Chloroplast</location>
    </subcellularLocation>
</comment>
<comment type="similarity">
    <text evidence="1">Belongs to the RNA polymerase beta' chain family. RpoC1 subfamily.</text>
</comment>
<reference key="1">
    <citation type="journal article" date="2006" name="BMC Evol. Biol.">
        <title>Complete plastid genome sequences of Drimys, Liriodendron, and Piper: implications for the phylogenetic relationships of magnoliids.</title>
        <authorList>
            <person name="Cai Z."/>
            <person name="Penaflor C."/>
            <person name="Kuehl J.V."/>
            <person name="Leebens-Mack J."/>
            <person name="Carlson J.E."/>
            <person name="dePamphilis C.W."/>
            <person name="Boore J.L."/>
            <person name="Jansen R.K."/>
        </authorList>
    </citation>
    <scope>NUCLEOTIDE SEQUENCE [LARGE SCALE GENOMIC DNA]</scope>
</reference>
<accession>Q06GR9</accession>
<gene>
    <name evidence="1" type="primary">rpoC1</name>
</gene>
<sequence length="688" mass="79476">MIDRYKHQQLRIGPVSPQQISAWANKILPNGEIVGEVTKPYTFHYKTNKPEKDGLFCERISGPIKSGICACGNYRVIGDEKEDPNFCEQCGVEFADSRARRYQMGYIKLTCPVTHVWYLKRLPSYIANLLDKPLKELEGLVYCDFSFARPVAKKPTFLRLRGLFEYEIQSRKYSIPLFFTTQGFDTFRNREISTGASAIREQLADLDLRIIIDRSLVEWKELGEEGSTGNEWEDRKIGRRKDFLVRRIELAKHFIRTNVEPERMVLSLLPVLPPELRPIIQIDGGKPMSSDINELYRRVIYRNNTLTDLLTTSRSTPGELVMCQEKLVQEAVDTLLDNGIRGQPMRDGYNKVYKSFSDVIEGKEGRFRETLLGKRVDYSGRSVIVVGPSLSLHRCGLPREIAIELFQTFLIRGLIRQRVASNIGIAKSKIREKEPIVWEILQEIMRGHPVLLNRAPTLHRLGIQAFQPILVEGRAICLHPLVCKGFNADFDGDQMAVHVPLSLEAQAEARLLMFSHMNLLSPAIGSPISVPTQDMLIGLYVLTIGNRQGVCANRYNPWNRRNYQNETVDHTKYDRTNYRYTKEKEPYFCSSYDALGAYRQKRIHLDTPLWLRWRLDQRIISLREVPIEVQYESLGTYHEIYRPYLIVKSVKKEILCIYIRTTVGHISFYREIEEAIQGFCRAYSYDGT</sequence>
<geneLocation type="chloroplast"/>